<organism>
    <name type="scientific">Tityus discrepans</name>
    <name type="common">Venezuelan scorpion</name>
    <dbReference type="NCBI Taxonomy" id="57059"/>
    <lineage>
        <taxon>Eukaryota</taxon>
        <taxon>Metazoa</taxon>
        <taxon>Ecdysozoa</taxon>
        <taxon>Arthropoda</taxon>
        <taxon>Chelicerata</taxon>
        <taxon>Arachnida</taxon>
        <taxon>Scorpiones</taxon>
        <taxon>Buthida</taxon>
        <taxon>Buthoidea</taxon>
        <taxon>Buthidae</taxon>
        <taxon>Tityus</taxon>
    </lineage>
</organism>
<comment type="function">
    <text evidence="1 3">Shows antibacterial activity against both Gram-positive bacteria (B.subtilis, M.luteus, E.faecalis) and Gram-negative bacteria (P.aeruginosa, Y.enterocolitica, A.calcoaceticus) (PubMed:19540868). Modifies membrane sodium permeability on Y.enterocolitica (PubMed:19540868). Is toxic to cockroaches and crabs, but is not toxic to mice. Does not induce haemolysis in human erythrocytes (PubMed:19540868). Acts by inhibiting the sodium (Nav) currents (By similarity).</text>
</comment>
<comment type="subcellular location">
    <subcellularLocation>
        <location evidence="3">Secreted</location>
    </subcellularLocation>
</comment>
<comment type="tissue specificity">
    <text evidence="6">Expressed by the venom gland.</text>
</comment>
<comment type="domain">
    <text evidence="5">Has the structural arrangement of an alpha-helix connected to antiparallel beta-sheets by disulfide bonds (CS-alpha/beta).</text>
</comment>
<comment type="mass spectrometry" mass="6916.0" method="Electrospray" evidence="3">
    <text>Monoisotopic.</text>
</comment>
<comment type="similarity">
    <text evidence="5">Belongs to the long (4 C-C) scorpion toxin superfamily. Sodium channel inhibitor family. Beta subfamily.</text>
</comment>
<dbReference type="SMR" id="P0CF39"/>
<dbReference type="GO" id="GO:0005576">
    <property type="term" value="C:extracellular region"/>
    <property type="evidence" value="ECO:0007669"/>
    <property type="project" value="UniProtKB-SubCell"/>
</dbReference>
<dbReference type="GO" id="GO:0019871">
    <property type="term" value="F:sodium channel inhibitor activity"/>
    <property type="evidence" value="ECO:0007669"/>
    <property type="project" value="InterPro"/>
</dbReference>
<dbReference type="GO" id="GO:0090729">
    <property type="term" value="F:toxin activity"/>
    <property type="evidence" value="ECO:0007669"/>
    <property type="project" value="UniProtKB-KW"/>
</dbReference>
<dbReference type="GO" id="GO:0042742">
    <property type="term" value="P:defense response to bacterium"/>
    <property type="evidence" value="ECO:0007669"/>
    <property type="project" value="UniProtKB-KW"/>
</dbReference>
<dbReference type="CDD" id="cd23106">
    <property type="entry name" value="neurotoxins_LC_scorpion"/>
    <property type="match status" value="1"/>
</dbReference>
<dbReference type="FunFam" id="3.30.30.10:FF:000002">
    <property type="entry name" value="Alpha-like toxin BmK-M1"/>
    <property type="match status" value="1"/>
</dbReference>
<dbReference type="Gene3D" id="3.30.30.10">
    <property type="entry name" value="Knottin, scorpion toxin-like"/>
    <property type="match status" value="1"/>
</dbReference>
<dbReference type="InterPro" id="IPR044062">
    <property type="entry name" value="LCN-type_CS_alpha_beta_dom"/>
</dbReference>
<dbReference type="InterPro" id="IPR003614">
    <property type="entry name" value="Scorpion_toxin-like"/>
</dbReference>
<dbReference type="InterPro" id="IPR036574">
    <property type="entry name" value="Scorpion_toxin-like_sf"/>
</dbReference>
<dbReference type="InterPro" id="IPR018218">
    <property type="entry name" value="Scorpion_toxinL"/>
</dbReference>
<dbReference type="InterPro" id="IPR002061">
    <property type="entry name" value="Scorpion_toxinL/defensin"/>
</dbReference>
<dbReference type="Pfam" id="PF00537">
    <property type="entry name" value="Toxin_3"/>
    <property type="match status" value="1"/>
</dbReference>
<dbReference type="PRINTS" id="PR00285">
    <property type="entry name" value="SCORPNTOXIN"/>
</dbReference>
<dbReference type="SMART" id="SM00505">
    <property type="entry name" value="Knot1"/>
    <property type="match status" value="1"/>
</dbReference>
<dbReference type="SUPFAM" id="SSF57095">
    <property type="entry name" value="Scorpion toxin-like"/>
    <property type="match status" value="1"/>
</dbReference>
<dbReference type="PROSITE" id="PS51863">
    <property type="entry name" value="LCN_CSAB"/>
    <property type="match status" value="1"/>
</dbReference>
<accession>P0CF39</accession>
<reference key="1">
    <citation type="journal article" date="2009" name="Toxicon">
        <title>Antibacterial activity of six novel peptides from Tityus discrepans scorpion venom. A fluorescent probe study of microbial membrane Na+ permeability changes.</title>
        <authorList>
            <person name="Diaz P."/>
            <person name="D'Suze G."/>
            <person name="Salazar V."/>
            <person name="Sevcik C."/>
            <person name="Shannon J.D."/>
            <person name="Sherman N.E."/>
            <person name="Fox J.W."/>
        </authorList>
    </citation>
    <scope>PROTEIN SEQUENCE</scope>
    <scope>FUNCTION</scope>
    <scope>SUBCELLULAR LOCATION</scope>
    <scope>MASS SPECTROMETRY</scope>
    <source>
        <tissue>Venom</tissue>
    </source>
</reference>
<reference key="2">
    <citation type="journal article" date="2012" name="PLoS ONE">
        <title>Identification and phylogenetic analysis of Tityus pachyurus and Tityus obscurus novel putative Na+-channel scorpion toxins.</title>
        <authorList>
            <person name="Guerrero-Vargas J.A."/>
            <person name="Mourao C.B."/>
            <person name="Quintero-Hernandez V."/>
            <person name="Possani L.D."/>
            <person name="Schwartz E.F."/>
        </authorList>
    </citation>
    <scope>NOMENCLATURE</scope>
</reference>
<sequence length="61" mass="6928">KDGYIIEHRGCKYSCFFGTNSWCNTECTLKKGSSGYCAWPACWCYGLPDNVKIFDSNNLKC</sequence>
<name>AMP1_TITDI</name>
<evidence type="ECO:0000250" key="1">
    <source>
        <dbReference type="UniProtKB" id="P0C1X7"/>
    </source>
</evidence>
<evidence type="ECO:0000255" key="2">
    <source>
        <dbReference type="PROSITE-ProRule" id="PRU01210"/>
    </source>
</evidence>
<evidence type="ECO:0000269" key="3">
    <source>
    </source>
</evidence>
<evidence type="ECO:0000303" key="4">
    <source>
    </source>
</evidence>
<evidence type="ECO:0000305" key="5"/>
<evidence type="ECO:0000305" key="6">
    <source>
    </source>
</evidence>
<feature type="chain" id="PRO_0000393444" description="Bactridin-1" evidence="3">
    <location>
        <begin position="1"/>
        <end position="61"/>
    </location>
</feature>
<feature type="domain" description="LCN-type CS-alpha/beta" evidence="2">
    <location>
        <begin position="1"/>
        <end position="61"/>
    </location>
</feature>
<feature type="disulfide bond" evidence="2">
    <location>
        <begin position="11"/>
        <end position="61"/>
    </location>
</feature>
<feature type="disulfide bond" evidence="2">
    <location>
        <begin position="15"/>
        <end position="37"/>
    </location>
</feature>
<feature type="disulfide bond" evidence="2">
    <location>
        <begin position="23"/>
        <end position="42"/>
    </location>
</feature>
<feature type="disulfide bond" evidence="2">
    <location>
        <begin position="27"/>
        <end position="44"/>
    </location>
</feature>
<keyword id="KW-0044">Antibiotic</keyword>
<keyword id="KW-0929">Antimicrobial</keyword>
<keyword id="KW-0903">Direct protein sequencing</keyword>
<keyword id="KW-1015">Disulfide bond</keyword>
<keyword id="KW-0872">Ion channel impairing toxin</keyword>
<keyword id="KW-0528">Neurotoxin</keyword>
<keyword id="KW-0964">Secreted</keyword>
<keyword id="KW-0800">Toxin</keyword>
<keyword id="KW-0738">Voltage-gated sodium channel impairing toxin</keyword>
<proteinExistence type="evidence at protein level"/>
<protein>
    <recommendedName>
        <fullName evidence="4">Bactridin-1</fullName>
        <shortName evidence="4">Bact1</shortName>
        <shortName evidence="4">Bactridine 1</shortName>
    </recommendedName>
    <alternativeName>
        <fullName>P-Arthr-Antm-beta* NaTx2.6</fullName>
    </alternativeName>
</protein>